<reference key="1">
    <citation type="journal article" date="1993" name="Biosci. Biotechnol. Biochem.">
        <title>Thermolabile alanine racemase from a psychotroph, Pseudomonas fluorescens: purification and properties.</title>
        <authorList>
            <person name="Yokoigawa K."/>
            <person name="Kawai H."/>
            <person name="Endo K."/>
            <person name="Lim Y.H."/>
            <person name="Esaki N."/>
            <person name="Soda K."/>
        </authorList>
    </citation>
    <scope>PROTEIN SEQUENCE</scope>
    <scope>FUNCTION</scope>
    <scope>CATALYTIC ACTIVITY</scope>
    <scope>COFACTOR</scope>
    <scope>BIOPHYSICOCHEMICAL PROPERTIES</scope>
    <scope>SUBUNIT</scope>
    <source>
        <strain>TM5-2</strain>
    </source>
</reference>
<name>ALR_PSEFL</name>
<organism>
    <name type="scientific">Pseudomonas fluorescens</name>
    <dbReference type="NCBI Taxonomy" id="294"/>
    <lineage>
        <taxon>Bacteria</taxon>
        <taxon>Pseudomonadati</taxon>
        <taxon>Pseudomonadota</taxon>
        <taxon>Gammaproteobacteria</taxon>
        <taxon>Pseudomonadales</taxon>
        <taxon>Pseudomonadaceae</taxon>
        <taxon>Pseudomonas</taxon>
    </lineage>
</organism>
<dbReference type="EC" id="5.1.1.1"/>
<dbReference type="PIR" id="PC1221">
    <property type="entry name" value="PC1221"/>
</dbReference>
<dbReference type="SABIO-RK" id="P33162"/>
<dbReference type="UniPathway" id="UPA00042">
    <property type="reaction ID" value="UER00497"/>
</dbReference>
<dbReference type="GO" id="GO:0008784">
    <property type="term" value="F:alanine racemase activity"/>
    <property type="evidence" value="ECO:0007669"/>
    <property type="project" value="UniProtKB-EC"/>
</dbReference>
<dbReference type="GO" id="GO:0030632">
    <property type="term" value="P:D-alanine biosynthetic process"/>
    <property type="evidence" value="ECO:0007669"/>
    <property type="project" value="UniProtKB-UniPathway"/>
</dbReference>
<feature type="chain" id="PRO_0000114548" description="Alanine racemase">
    <location>
        <begin position="1"/>
        <end position="25" status="greater than"/>
    </location>
</feature>
<feature type="non-terminal residue">
    <location>
        <position position="25"/>
    </location>
</feature>
<accession>P33162</accession>
<protein>
    <recommendedName>
        <fullName>Alanine racemase</fullName>
        <ecNumber>5.1.1.1</ecNumber>
    </recommendedName>
</protein>
<evidence type="ECO:0000269" key="1">
    <source>
    </source>
</evidence>
<evidence type="ECO:0000305" key="2"/>
<keyword id="KW-0903">Direct protein sequencing</keyword>
<keyword id="KW-0413">Isomerase</keyword>
<keyword id="KW-0663">Pyridoxal phosphate</keyword>
<proteinExistence type="evidence at protein level"/>
<sequence length="25" mass="2775">MXPARALIDLQALRHNYQLAAEVIG</sequence>
<comment type="function">
    <text evidence="1">Catalyzes the interconversion of L-alanine and D-alanine.</text>
</comment>
<comment type="catalytic activity">
    <reaction evidence="1">
        <text>L-alanine = D-alanine</text>
        <dbReference type="Rhea" id="RHEA:20249"/>
        <dbReference type="ChEBI" id="CHEBI:57416"/>
        <dbReference type="ChEBI" id="CHEBI:57972"/>
        <dbReference type="EC" id="5.1.1.1"/>
    </reaction>
</comment>
<comment type="cofactor">
    <cofactor evidence="1">
        <name>pyridoxal 5'-phosphate</name>
        <dbReference type="ChEBI" id="CHEBI:597326"/>
    </cofactor>
</comment>
<comment type="biophysicochemical properties">
    <phDependence>
        <text evidence="1">Optimum pH is 8.3.</text>
    </phDependence>
    <temperatureDependence>
        <text evidence="1">Optimum temperature is 30 degrees Celsius. Thermolabile and psychrotrophic. Shows catalytic activity even at 0 degree Celsius.</text>
    </temperatureDependence>
</comment>
<comment type="pathway">
    <text>Amino-acid biosynthesis; D-alanine biosynthesis; D-alanine from L-alanine: step 1/1.</text>
</comment>
<comment type="subunit">
    <text evidence="1">Homodimer.</text>
</comment>
<comment type="similarity">
    <text evidence="2">Belongs to the alanine racemase family.</text>
</comment>